<dbReference type="EMBL" id="BX548175">
    <property type="protein sequence ID" value="CAE21362.1"/>
    <property type="molecule type" value="Genomic_DNA"/>
</dbReference>
<dbReference type="RefSeq" id="WP_011130558.1">
    <property type="nucleotide sequence ID" value="NC_005071.1"/>
</dbReference>
<dbReference type="SMR" id="Q7V6H4"/>
<dbReference type="KEGG" id="pmt:PMT_1187"/>
<dbReference type="eggNOG" id="COG0593">
    <property type="taxonomic scope" value="Bacteria"/>
</dbReference>
<dbReference type="HOGENOM" id="CLU_026910_3_1_3"/>
<dbReference type="OrthoDB" id="9807019at2"/>
<dbReference type="Proteomes" id="UP000001423">
    <property type="component" value="Chromosome"/>
</dbReference>
<dbReference type="GO" id="GO:0005737">
    <property type="term" value="C:cytoplasm"/>
    <property type="evidence" value="ECO:0007669"/>
    <property type="project" value="UniProtKB-SubCell"/>
</dbReference>
<dbReference type="GO" id="GO:0005886">
    <property type="term" value="C:plasma membrane"/>
    <property type="evidence" value="ECO:0007669"/>
    <property type="project" value="TreeGrafter"/>
</dbReference>
<dbReference type="GO" id="GO:0005524">
    <property type="term" value="F:ATP binding"/>
    <property type="evidence" value="ECO:0007669"/>
    <property type="project" value="UniProtKB-UniRule"/>
</dbReference>
<dbReference type="GO" id="GO:0016887">
    <property type="term" value="F:ATP hydrolysis activity"/>
    <property type="evidence" value="ECO:0007669"/>
    <property type="project" value="InterPro"/>
</dbReference>
<dbReference type="GO" id="GO:0003688">
    <property type="term" value="F:DNA replication origin binding"/>
    <property type="evidence" value="ECO:0007669"/>
    <property type="project" value="UniProtKB-UniRule"/>
</dbReference>
<dbReference type="GO" id="GO:0008289">
    <property type="term" value="F:lipid binding"/>
    <property type="evidence" value="ECO:0007669"/>
    <property type="project" value="UniProtKB-KW"/>
</dbReference>
<dbReference type="GO" id="GO:0006270">
    <property type="term" value="P:DNA replication initiation"/>
    <property type="evidence" value="ECO:0007669"/>
    <property type="project" value="UniProtKB-UniRule"/>
</dbReference>
<dbReference type="GO" id="GO:0006275">
    <property type="term" value="P:regulation of DNA replication"/>
    <property type="evidence" value="ECO:0007669"/>
    <property type="project" value="UniProtKB-UniRule"/>
</dbReference>
<dbReference type="CDD" id="cd00009">
    <property type="entry name" value="AAA"/>
    <property type="match status" value="1"/>
</dbReference>
<dbReference type="CDD" id="cd06571">
    <property type="entry name" value="Bac_DnaA_C"/>
    <property type="match status" value="1"/>
</dbReference>
<dbReference type="FunFam" id="3.40.50.300:FF:000668">
    <property type="entry name" value="Chromosomal replication initiator protein DnaA"/>
    <property type="match status" value="1"/>
</dbReference>
<dbReference type="Gene3D" id="1.10.1750.10">
    <property type="match status" value="1"/>
</dbReference>
<dbReference type="Gene3D" id="1.10.8.60">
    <property type="match status" value="1"/>
</dbReference>
<dbReference type="Gene3D" id="3.30.300.180">
    <property type="match status" value="1"/>
</dbReference>
<dbReference type="Gene3D" id="3.40.50.300">
    <property type="entry name" value="P-loop containing nucleotide triphosphate hydrolases"/>
    <property type="match status" value="1"/>
</dbReference>
<dbReference type="HAMAP" id="MF_00377">
    <property type="entry name" value="DnaA_bact"/>
    <property type="match status" value="1"/>
</dbReference>
<dbReference type="InterPro" id="IPR003593">
    <property type="entry name" value="AAA+_ATPase"/>
</dbReference>
<dbReference type="InterPro" id="IPR001957">
    <property type="entry name" value="Chromosome_initiator_DnaA"/>
</dbReference>
<dbReference type="InterPro" id="IPR020591">
    <property type="entry name" value="Chromosome_initiator_DnaA-like"/>
</dbReference>
<dbReference type="InterPro" id="IPR018312">
    <property type="entry name" value="Chromosome_initiator_DnaA_CS"/>
</dbReference>
<dbReference type="InterPro" id="IPR013159">
    <property type="entry name" value="DnaA_C"/>
</dbReference>
<dbReference type="InterPro" id="IPR013317">
    <property type="entry name" value="DnaA_dom"/>
</dbReference>
<dbReference type="InterPro" id="IPR024633">
    <property type="entry name" value="DnaA_N_dom"/>
</dbReference>
<dbReference type="InterPro" id="IPR038454">
    <property type="entry name" value="DnaA_N_sf"/>
</dbReference>
<dbReference type="InterPro" id="IPR027417">
    <property type="entry name" value="P-loop_NTPase"/>
</dbReference>
<dbReference type="InterPro" id="IPR010921">
    <property type="entry name" value="Trp_repressor/repl_initiator"/>
</dbReference>
<dbReference type="NCBIfam" id="TIGR00362">
    <property type="entry name" value="DnaA"/>
    <property type="match status" value="1"/>
</dbReference>
<dbReference type="PANTHER" id="PTHR30050">
    <property type="entry name" value="CHROMOSOMAL REPLICATION INITIATOR PROTEIN DNAA"/>
    <property type="match status" value="1"/>
</dbReference>
<dbReference type="PANTHER" id="PTHR30050:SF2">
    <property type="entry name" value="CHROMOSOMAL REPLICATION INITIATOR PROTEIN DNAA"/>
    <property type="match status" value="1"/>
</dbReference>
<dbReference type="Pfam" id="PF00308">
    <property type="entry name" value="Bac_DnaA"/>
    <property type="match status" value="1"/>
</dbReference>
<dbReference type="Pfam" id="PF08299">
    <property type="entry name" value="Bac_DnaA_C"/>
    <property type="match status" value="1"/>
</dbReference>
<dbReference type="Pfam" id="PF11638">
    <property type="entry name" value="DnaA_N"/>
    <property type="match status" value="1"/>
</dbReference>
<dbReference type="PRINTS" id="PR00051">
    <property type="entry name" value="DNAA"/>
</dbReference>
<dbReference type="SMART" id="SM00382">
    <property type="entry name" value="AAA"/>
    <property type="match status" value="1"/>
</dbReference>
<dbReference type="SMART" id="SM00760">
    <property type="entry name" value="Bac_DnaA_C"/>
    <property type="match status" value="1"/>
</dbReference>
<dbReference type="SUPFAM" id="SSF52540">
    <property type="entry name" value="P-loop containing nucleoside triphosphate hydrolases"/>
    <property type="match status" value="1"/>
</dbReference>
<dbReference type="SUPFAM" id="SSF48295">
    <property type="entry name" value="TrpR-like"/>
    <property type="match status" value="1"/>
</dbReference>
<dbReference type="PROSITE" id="PS01008">
    <property type="entry name" value="DNAA"/>
    <property type="match status" value="1"/>
</dbReference>
<sequence>MVITGNELWSKVQQALQHNLSKPTFETWIRPAICSGFRDGELTLIAPNSFASNWLRKNYVQTIEAAAAKIYGQSVRVSVQAQEEDSAERVLPPMTSASIPSPLPTAETTTASVAPSSGPRRILPGLNLRYVFNRFVVGPNSRMAHAAALAVAEAPGREFNPLFICGGVGLGKTHLMQAIGHYRLEINPEAKVAYVSTETFTNDLIQAIRKDGMQAFRDRYRATDLILVDDIQFIEGKEYTQEEFFHTFNALHEAGRQIVIASDRPPSQIPKLQERLISRFSMGLIADIQSPDLETRMAILQKKAEQERMMLPRDLIQYIAGRFTSNIRELEGALTRAVAFASITGLPMTVESVAPMLDPNGQGVDVTPQQVIDKVSEVFDVTPQDMRSSSRRRAVSHARQVGMYLMRQGTDLSLPRIGETFGGKDHTTVMYAIEQVEKRLSSDPQLASQVRRVRDLLQIDSRRRR</sequence>
<keyword id="KW-0067">ATP-binding</keyword>
<keyword id="KW-0963">Cytoplasm</keyword>
<keyword id="KW-0235">DNA replication</keyword>
<keyword id="KW-0238">DNA-binding</keyword>
<keyword id="KW-0446">Lipid-binding</keyword>
<keyword id="KW-0547">Nucleotide-binding</keyword>
<keyword id="KW-1185">Reference proteome</keyword>
<reference key="1">
    <citation type="journal article" date="2003" name="Nature">
        <title>Genome divergence in two Prochlorococcus ecotypes reflects oceanic niche differentiation.</title>
        <authorList>
            <person name="Rocap G."/>
            <person name="Larimer F.W."/>
            <person name="Lamerdin J.E."/>
            <person name="Malfatti S."/>
            <person name="Chain P."/>
            <person name="Ahlgren N.A."/>
            <person name="Arellano A."/>
            <person name="Coleman M."/>
            <person name="Hauser L."/>
            <person name="Hess W.R."/>
            <person name="Johnson Z.I."/>
            <person name="Land M.L."/>
            <person name="Lindell D."/>
            <person name="Post A.F."/>
            <person name="Regala W."/>
            <person name="Shah M."/>
            <person name="Shaw S.L."/>
            <person name="Steglich C."/>
            <person name="Sullivan M.B."/>
            <person name="Ting C.S."/>
            <person name="Tolonen A."/>
            <person name="Webb E.A."/>
            <person name="Zinser E.R."/>
            <person name="Chisholm S.W."/>
        </authorList>
    </citation>
    <scope>NUCLEOTIDE SEQUENCE [LARGE SCALE GENOMIC DNA]</scope>
    <source>
        <strain>MIT 9313</strain>
    </source>
</reference>
<proteinExistence type="inferred from homology"/>
<feature type="chain" id="PRO_0000114235" description="Chromosomal replication initiator protein DnaA">
    <location>
        <begin position="1"/>
        <end position="465"/>
    </location>
</feature>
<feature type="region of interest" description="Domain I, interacts with DnaA modulators" evidence="1">
    <location>
        <begin position="1"/>
        <end position="73"/>
    </location>
</feature>
<feature type="region of interest" description="Domain II" evidence="1">
    <location>
        <begin position="73"/>
        <end position="124"/>
    </location>
</feature>
<feature type="region of interest" description="Disordered" evidence="2">
    <location>
        <begin position="86"/>
        <end position="116"/>
    </location>
</feature>
<feature type="region of interest" description="Domain III, AAA+ region" evidence="1">
    <location>
        <begin position="125"/>
        <end position="341"/>
    </location>
</feature>
<feature type="region of interest" description="Domain IV, binds dsDNA" evidence="1">
    <location>
        <begin position="342"/>
        <end position="465"/>
    </location>
</feature>
<feature type="compositionally biased region" description="Polar residues" evidence="2">
    <location>
        <begin position="106"/>
        <end position="115"/>
    </location>
</feature>
<feature type="binding site" evidence="1">
    <location>
        <position position="169"/>
    </location>
    <ligand>
        <name>ATP</name>
        <dbReference type="ChEBI" id="CHEBI:30616"/>
    </ligand>
</feature>
<feature type="binding site" evidence="1">
    <location>
        <position position="171"/>
    </location>
    <ligand>
        <name>ATP</name>
        <dbReference type="ChEBI" id="CHEBI:30616"/>
    </ligand>
</feature>
<feature type="binding site" evidence="1">
    <location>
        <position position="172"/>
    </location>
    <ligand>
        <name>ATP</name>
        <dbReference type="ChEBI" id="CHEBI:30616"/>
    </ligand>
</feature>
<feature type="binding site" evidence="1">
    <location>
        <position position="173"/>
    </location>
    <ligand>
        <name>ATP</name>
        <dbReference type="ChEBI" id="CHEBI:30616"/>
    </ligand>
</feature>
<protein>
    <recommendedName>
        <fullName evidence="1">Chromosomal replication initiator protein DnaA</fullName>
    </recommendedName>
</protein>
<gene>
    <name evidence="1" type="primary">dnaA</name>
    <name type="ordered locus">PMT_1187</name>
</gene>
<name>DNAA_PROMM</name>
<evidence type="ECO:0000255" key="1">
    <source>
        <dbReference type="HAMAP-Rule" id="MF_00377"/>
    </source>
</evidence>
<evidence type="ECO:0000256" key="2">
    <source>
        <dbReference type="SAM" id="MobiDB-lite"/>
    </source>
</evidence>
<organism>
    <name type="scientific">Prochlorococcus marinus (strain MIT 9313)</name>
    <dbReference type="NCBI Taxonomy" id="74547"/>
    <lineage>
        <taxon>Bacteria</taxon>
        <taxon>Bacillati</taxon>
        <taxon>Cyanobacteriota</taxon>
        <taxon>Cyanophyceae</taxon>
        <taxon>Synechococcales</taxon>
        <taxon>Prochlorococcaceae</taxon>
        <taxon>Prochlorococcus</taxon>
    </lineage>
</organism>
<accession>Q7V6H4</accession>
<comment type="function">
    <text evidence="1">Plays an essential role in the initiation and regulation of chromosomal replication. ATP-DnaA binds to the origin of replication (oriC) to initiate formation of the DNA replication initiation complex once per cell cycle. Binds the DnaA box (a 9 base pair repeat at the origin) and separates the double-stranded (ds)DNA. Forms a right-handed helical filament on oriC DNA; dsDNA binds to the exterior of the filament while single-stranded (ss)DNA is stabiized in the filament's interior. The ATP-DnaA-oriC complex binds and stabilizes one strand of the AT-rich DNA unwinding element (DUE), permitting loading of DNA polymerase. After initiation quickly degrades to an ADP-DnaA complex that is not apt for DNA replication. Binds acidic phospholipids.</text>
</comment>
<comment type="subunit">
    <text evidence="1">Oligomerizes as a right-handed, spiral filament on DNA at oriC.</text>
</comment>
<comment type="subcellular location">
    <subcellularLocation>
        <location evidence="1">Cytoplasm</location>
    </subcellularLocation>
</comment>
<comment type="domain">
    <text evidence="1">Domain I is involved in oligomerization and binding regulators, domain II is flexibile and of varying length in different bacteria, domain III forms the AAA+ region, while domain IV binds dsDNA.</text>
</comment>
<comment type="similarity">
    <text evidence="1">Belongs to the DnaA family.</text>
</comment>